<name>AGALB_NEOFI</name>
<keyword id="KW-1015">Disulfide bond</keyword>
<keyword id="KW-0325">Glycoprotein</keyword>
<keyword id="KW-0326">Glycosidase</keyword>
<keyword id="KW-0378">Hydrolase</keyword>
<keyword id="KW-1185">Reference proteome</keyword>
<keyword id="KW-0964">Secreted</keyword>
<keyword id="KW-0732">Signal</keyword>
<comment type="function">
    <text evidence="1">Hydrolyzes a variety of simple alpha-D-galactoside as well as more complex molecules such as oligosaccharides and polysaccharides.</text>
</comment>
<comment type="catalytic activity">
    <reaction>
        <text>Hydrolysis of terminal, non-reducing alpha-D-galactose residues in alpha-D-galactosides, including galactose oligosaccharides, galactomannans and galactolipids.</text>
        <dbReference type="EC" id="3.2.1.22"/>
    </reaction>
</comment>
<comment type="subcellular location">
    <subcellularLocation>
        <location evidence="3">Secreted</location>
    </subcellularLocation>
</comment>
<comment type="similarity">
    <text evidence="3">Belongs to the glycosyl hydrolase 27 family.</text>
</comment>
<evidence type="ECO:0000250" key="1"/>
<evidence type="ECO:0000255" key="2"/>
<evidence type="ECO:0000305" key="3"/>
<sequence>MTTFLSLTTAAAVLTLARGSNALVRPGNVGKLPALGWNSWNAFGCDIDAAKIMTAANEVVNLGLKDLGYEYINIDDCWSVKSGRDASTQRMVPDPEKFPDGISGLADQIHDLGLKVGIYSSAGLTTCAGYPASLGYEDIDAQTFAEWGIDYLKYDNCGVPSNWTDAYTYCVPDPGSKSTNGTCPDNKNPAPAGYDWRTSLTAERYRRMRDALVSVDRTILYSLCNWGQADVNDWGNETGNSWRTTGDITPSWPRIAAIANENSFLMNYVDFWGYPDPDMLEVGNGNLTLAENRAHFALWAAMKSPLIIGTALDSISQDHLAILSNKILLKFHQDPVVGRPAHPYKWGYNPDWTFDPAHPAEYWSGASSVLGGTLVLMLNSEDTKQRRTAVWKEIPELKDVLGRQGKRRTGFRVTDVWTGKDLGCVRDHYSVELESHDVAALVVGRAC</sequence>
<feature type="signal peptide" evidence="2">
    <location>
        <begin position="1"/>
        <end position="22"/>
    </location>
</feature>
<feature type="chain" id="PRO_0000393221" description="Probable alpha-galactosidase B">
    <location>
        <begin position="23"/>
        <end position="447"/>
    </location>
</feature>
<feature type="active site" description="Nucleophile" evidence="1">
    <location>
        <position position="155"/>
    </location>
</feature>
<feature type="active site" description="Proton donor" evidence="1">
    <location>
        <position position="247"/>
    </location>
</feature>
<feature type="binding site" evidence="1">
    <location>
        <begin position="225"/>
        <end position="229"/>
    </location>
    <ligand>
        <name>substrate</name>
    </ligand>
</feature>
<feature type="glycosylation site" description="N-linked (GlcNAc...) asparagine" evidence="2">
    <location>
        <position position="162"/>
    </location>
</feature>
<feature type="glycosylation site" description="N-linked (GlcNAc...) asparagine" evidence="2">
    <location>
        <position position="180"/>
    </location>
</feature>
<feature type="glycosylation site" description="N-linked (GlcNAc...) asparagine" evidence="2">
    <location>
        <position position="236"/>
    </location>
</feature>
<feature type="glycosylation site" description="N-linked (GlcNAc...) asparagine" evidence="2">
    <location>
        <position position="286"/>
    </location>
</feature>
<feature type="disulfide bond" evidence="1">
    <location>
        <begin position="45"/>
        <end position="77"/>
    </location>
</feature>
<feature type="disulfide bond" evidence="1">
    <location>
        <begin position="127"/>
        <end position="157"/>
    </location>
</feature>
<proteinExistence type="inferred from homology"/>
<reference key="1">
    <citation type="journal article" date="2008" name="PLoS Genet.">
        <title>Genomic islands in the pathogenic filamentous fungus Aspergillus fumigatus.</title>
        <authorList>
            <person name="Fedorova N.D."/>
            <person name="Khaldi N."/>
            <person name="Joardar V.S."/>
            <person name="Maiti R."/>
            <person name="Amedeo P."/>
            <person name="Anderson M.J."/>
            <person name="Crabtree J."/>
            <person name="Silva J.C."/>
            <person name="Badger J.H."/>
            <person name="Albarraq A."/>
            <person name="Angiuoli S."/>
            <person name="Bussey H."/>
            <person name="Bowyer P."/>
            <person name="Cotty P.J."/>
            <person name="Dyer P.S."/>
            <person name="Egan A."/>
            <person name="Galens K."/>
            <person name="Fraser-Liggett C.M."/>
            <person name="Haas B.J."/>
            <person name="Inman J.M."/>
            <person name="Kent R."/>
            <person name="Lemieux S."/>
            <person name="Malavazi I."/>
            <person name="Orvis J."/>
            <person name="Roemer T."/>
            <person name="Ronning C.M."/>
            <person name="Sundaram J.P."/>
            <person name="Sutton G."/>
            <person name="Turner G."/>
            <person name="Venter J.C."/>
            <person name="White O.R."/>
            <person name="Whitty B.R."/>
            <person name="Youngman P."/>
            <person name="Wolfe K.H."/>
            <person name="Goldman G.H."/>
            <person name="Wortman J.R."/>
            <person name="Jiang B."/>
            <person name="Denning D.W."/>
            <person name="Nierman W.C."/>
        </authorList>
    </citation>
    <scope>NUCLEOTIDE SEQUENCE [LARGE SCALE GENOMIC DNA]</scope>
    <source>
        <strain>ATCC 1020 / DSM 3700 / CBS 544.65 / FGSC A1164 / JCM 1740 / NRRL 181 / WB 181</strain>
    </source>
</reference>
<accession>A1D0A3</accession>
<organism>
    <name type="scientific">Neosartorya fischeri (strain ATCC 1020 / DSM 3700 / CBS 544.65 / FGSC A1164 / JCM 1740 / NRRL 181 / WB 181)</name>
    <name type="common">Aspergillus fischerianus</name>
    <dbReference type="NCBI Taxonomy" id="331117"/>
    <lineage>
        <taxon>Eukaryota</taxon>
        <taxon>Fungi</taxon>
        <taxon>Dikarya</taxon>
        <taxon>Ascomycota</taxon>
        <taxon>Pezizomycotina</taxon>
        <taxon>Eurotiomycetes</taxon>
        <taxon>Eurotiomycetidae</taxon>
        <taxon>Eurotiales</taxon>
        <taxon>Aspergillaceae</taxon>
        <taxon>Aspergillus</taxon>
        <taxon>Aspergillus subgen. Fumigati</taxon>
    </lineage>
</organism>
<protein>
    <recommendedName>
        <fullName>Probable alpha-galactosidase B</fullName>
        <ecNumber>3.2.1.22</ecNumber>
    </recommendedName>
    <alternativeName>
        <fullName>Melibiase B</fullName>
    </alternativeName>
</protein>
<dbReference type="EC" id="3.2.1.22"/>
<dbReference type="EMBL" id="DS027686">
    <property type="protein sequence ID" value="EAW24423.1"/>
    <property type="molecule type" value="Genomic_DNA"/>
</dbReference>
<dbReference type="RefSeq" id="XP_001266320.1">
    <property type="nucleotide sequence ID" value="XM_001266319.1"/>
</dbReference>
<dbReference type="SMR" id="A1D0A3"/>
<dbReference type="STRING" id="331117.A1D0A3"/>
<dbReference type="GlyCosmos" id="A1D0A3">
    <property type="glycosylation" value="4 sites, No reported glycans"/>
</dbReference>
<dbReference type="EnsemblFungi" id="EAW24423">
    <property type="protein sequence ID" value="EAW24423"/>
    <property type="gene ID" value="NFIA_039990"/>
</dbReference>
<dbReference type="GeneID" id="4593097"/>
<dbReference type="KEGG" id="nfi:NFIA_039990"/>
<dbReference type="VEuPathDB" id="FungiDB:NFIA_039990"/>
<dbReference type="eggNOG" id="KOG2366">
    <property type="taxonomic scope" value="Eukaryota"/>
</dbReference>
<dbReference type="HOGENOM" id="CLU_013093_2_2_1"/>
<dbReference type="OMA" id="MTPTMGW"/>
<dbReference type="OrthoDB" id="5795902at2759"/>
<dbReference type="Proteomes" id="UP000006702">
    <property type="component" value="Unassembled WGS sequence"/>
</dbReference>
<dbReference type="GO" id="GO:0005576">
    <property type="term" value="C:extracellular region"/>
    <property type="evidence" value="ECO:0007669"/>
    <property type="project" value="UniProtKB-SubCell"/>
</dbReference>
<dbReference type="GO" id="GO:0004557">
    <property type="term" value="F:alpha-galactosidase activity"/>
    <property type="evidence" value="ECO:0007669"/>
    <property type="project" value="UniProtKB-EC"/>
</dbReference>
<dbReference type="GO" id="GO:0005975">
    <property type="term" value="P:carbohydrate metabolic process"/>
    <property type="evidence" value="ECO:0007669"/>
    <property type="project" value="InterPro"/>
</dbReference>
<dbReference type="CDD" id="cd14792">
    <property type="entry name" value="GH27"/>
    <property type="match status" value="1"/>
</dbReference>
<dbReference type="FunFam" id="2.60.40.1180:FF:000049">
    <property type="entry name" value="Alpha-galactosidase"/>
    <property type="match status" value="1"/>
</dbReference>
<dbReference type="FunFam" id="3.20.20.70:FF:000307">
    <property type="entry name" value="Alpha-galactosidase"/>
    <property type="match status" value="1"/>
</dbReference>
<dbReference type="Gene3D" id="3.20.20.70">
    <property type="entry name" value="Aldolase class I"/>
    <property type="match status" value="1"/>
</dbReference>
<dbReference type="Gene3D" id="2.60.40.1180">
    <property type="entry name" value="Golgi alpha-mannosidase II"/>
    <property type="match status" value="1"/>
</dbReference>
<dbReference type="InterPro" id="IPR013785">
    <property type="entry name" value="Aldolase_TIM"/>
</dbReference>
<dbReference type="InterPro" id="IPR002241">
    <property type="entry name" value="Glyco_hydro_27"/>
</dbReference>
<dbReference type="InterPro" id="IPR000111">
    <property type="entry name" value="Glyco_hydro_27/36_CS"/>
</dbReference>
<dbReference type="InterPro" id="IPR013780">
    <property type="entry name" value="Glyco_hydro_b"/>
</dbReference>
<dbReference type="InterPro" id="IPR017853">
    <property type="entry name" value="Glycoside_hydrolase_SF"/>
</dbReference>
<dbReference type="InterPro" id="IPR041233">
    <property type="entry name" value="Melibiase_C"/>
</dbReference>
<dbReference type="PANTHER" id="PTHR11452:SF61">
    <property type="entry name" value="ALPHA-GALACTOSIDASE B-RELATED"/>
    <property type="match status" value="1"/>
</dbReference>
<dbReference type="PANTHER" id="PTHR11452">
    <property type="entry name" value="ALPHA-GALACTOSIDASE/ALPHA-N-ACETYLGALACTOSAMINIDASE"/>
    <property type="match status" value="1"/>
</dbReference>
<dbReference type="Pfam" id="PF16499">
    <property type="entry name" value="Melibiase_2"/>
    <property type="match status" value="2"/>
</dbReference>
<dbReference type="Pfam" id="PF17801">
    <property type="entry name" value="Melibiase_C"/>
    <property type="match status" value="1"/>
</dbReference>
<dbReference type="PRINTS" id="PR00740">
    <property type="entry name" value="GLHYDRLASE27"/>
</dbReference>
<dbReference type="SUPFAM" id="SSF51445">
    <property type="entry name" value="(Trans)glycosidases"/>
    <property type="match status" value="1"/>
</dbReference>
<dbReference type="SUPFAM" id="SSF51011">
    <property type="entry name" value="Glycosyl hydrolase domain"/>
    <property type="match status" value="1"/>
</dbReference>
<dbReference type="PROSITE" id="PS00512">
    <property type="entry name" value="ALPHA_GALACTOSIDASE"/>
    <property type="match status" value="1"/>
</dbReference>
<gene>
    <name type="primary">aglB</name>
    <name type="ORF">NFIA_039990</name>
</gene>